<feature type="chain" id="PRO_0000366298" description="UPF0735 ACT domain-containing protein CLH_2637">
    <location>
        <begin position="1"/>
        <end position="145"/>
    </location>
</feature>
<feature type="domain" description="ACT" evidence="1">
    <location>
        <begin position="69"/>
        <end position="144"/>
    </location>
</feature>
<reference key="1">
    <citation type="submission" date="2008-05" db="EMBL/GenBank/DDBJ databases">
        <title>Complete genome sequence of Clostridium botulinum E3 str. Alaska E43.</title>
        <authorList>
            <person name="Brinkac L.M."/>
            <person name="Brown J.L."/>
            <person name="Bruce D."/>
            <person name="Detter C."/>
            <person name="Munk C."/>
            <person name="Smith L.A."/>
            <person name="Smith T.J."/>
            <person name="Sutton G."/>
            <person name="Brettin T.S."/>
        </authorList>
    </citation>
    <scope>NUCLEOTIDE SEQUENCE [LARGE SCALE GENOMIC DNA]</scope>
    <source>
        <strain>Alaska E43 / Type E3</strain>
    </source>
</reference>
<evidence type="ECO:0000255" key="1">
    <source>
        <dbReference type="HAMAP-Rule" id="MF_00707"/>
    </source>
</evidence>
<comment type="similarity">
    <text evidence="1">Belongs to the UPF0735 family.</text>
</comment>
<proteinExistence type="inferred from homology"/>
<gene>
    <name type="ordered locus">CLH_2637</name>
</gene>
<name>Y2637_CLOBA</name>
<organism>
    <name type="scientific">Clostridium botulinum (strain Alaska E43 / Type E3)</name>
    <dbReference type="NCBI Taxonomy" id="508767"/>
    <lineage>
        <taxon>Bacteria</taxon>
        <taxon>Bacillati</taxon>
        <taxon>Bacillota</taxon>
        <taxon>Clostridia</taxon>
        <taxon>Eubacteriales</taxon>
        <taxon>Clostridiaceae</taxon>
        <taxon>Clostridium</taxon>
    </lineage>
</organism>
<dbReference type="EMBL" id="CP001078">
    <property type="protein sequence ID" value="ACD53178.1"/>
    <property type="molecule type" value="Genomic_DNA"/>
</dbReference>
<dbReference type="RefSeq" id="WP_003373709.1">
    <property type="nucleotide sequence ID" value="NC_010723.1"/>
</dbReference>
<dbReference type="KEGG" id="cbt:CLH_2637"/>
<dbReference type="HOGENOM" id="CLU_128147_0_0_9"/>
<dbReference type="CDD" id="cd04888">
    <property type="entry name" value="ACT_PheB-BS"/>
    <property type="match status" value="1"/>
</dbReference>
<dbReference type="Gene3D" id="3.30.70.260">
    <property type="match status" value="1"/>
</dbReference>
<dbReference type="HAMAP" id="MF_00707">
    <property type="entry name" value="UPF0735"/>
    <property type="match status" value="1"/>
</dbReference>
<dbReference type="InterPro" id="IPR045865">
    <property type="entry name" value="ACT-like_dom_sf"/>
</dbReference>
<dbReference type="InterPro" id="IPR002912">
    <property type="entry name" value="ACT_dom"/>
</dbReference>
<dbReference type="InterPro" id="IPR008310">
    <property type="entry name" value="UPF0735_ACT_dom-cont"/>
</dbReference>
<dbReference type="NCBIfam" id="NF003361">
    <property type="entry name" value="PRK04435.1"/>
    <property type="match status" value="1"/>
</dbReference>
<dbReference type="Pfam" id="PF13291">
    <property type="entry name" value="ACT_4"/>
    <property type="match status" value="1"/>
</dbReference>
<dbReference type="PIRSF" id="PIRSF025624">
    <property type="entry name" value="ACT_PheB"/>
    <property type="match status" value="1"/>
</dbReference>
<dbReference type="SUPFAM" id="SSF55021">
    <property type="entry name" value="ACT-like"/>
    <property type="match status" value="1"/>
</dbReference>
<dbReference type="PROSITE" id="PS51671">
    <property type="entry name" value="ACT"/>
    <property type="match status" value="1"/>
</dbReference>
<protein>
    <recommendedName>
        <fullName evidence="1">UPF0735 ACT domain-containing protein CLH_2637</fullName>
    </recommendedName>
</protein>
<sequence>MKGNYLVIDKRVLPDVYEKVVFAQKLLKDGKVKEITEATKIAGISRSVYYKYKDYIFDFAETSQGKKVTFNLIVKDQTGVLSGVINYISEQGGNILTINQGIPINGVANISVTIDMSTLIGDIKTLLNGLSDIQYVEKIEFVAME</sequence>
<accession>B2UX32</accession>